<dbReference type="EC" id="2.1.2.1" evidence="1"/>
<dbReference type="EMBL" id="CP001161">
    <property type="protein sequence ID" value="ACL30652.1"/>
    <property type="molecule type" value="Genomic_DNA"/>
</dbReference>
<dbReference type="RefSeq" id="WP_009874243.1">
    <property type="nucleotide sequence ID" value="NC_011833.1"/>
</dbReference>
<dbReference type="SMR" id="B8D981"/>
<dbReference type="KEGG" id="bap:BUAP5A_284"/>
<dbReference type="HOGENOM" id="CLU_022477_2_1_6"/>
<dbReference type="OrthoDB" id="9803846at2"/>
<dbReference type="UniPathway" id="UPA00193"/>
<dbReference type="UniPathway" id="UPA00288">
    <property type="reaction ID" value="UER01023"/>
</dbReference>
<dbReference type="Proteomes" id="UP000006904">
    <property type="component" value="Chromosome"/>
</dbReference>
<dbReference type="GO" id="GO:0005829">
    <property type="term" value="C:cytosol"/>
    <property type="evidence" value="ECO:0007669"/>
    <property type="project" value="TreeGrafter"/>
</dbReference>
<dbReference type="GO" id="GO:0004372">
    <property type="term" value="F:glycine hydroxymethyltransferase activity"/>
    <property type="evidence" value="ECO:0007669"/>
    <property type="project" value="UniProtKB-UniRule"/>
</dbReference>
<dbReference type="GO" id="GO:0030170">
    <property type="term" value="F:pyridoxal phosphate binding"/>
    <property type="evidence" value="ECO:0007669"/>
    <property type="project" value="UniProtKB-UniRule"/>
</dbReference>
<dbReference type="GO" id="GO:0019264">
    <property type="term" value="P:glycine biosynthetic process from serine"/>
    <property type="evidence" value="ECO:0007669"/>
    <property type="project" value="UniProtKB-UniRule"/>
</dbReference>
<dbReference type="GO" id="GO:0035999">
    <property type="term" value="P:tetrahydrofolate interconversion"/>
    <property type="evidence" value="ECO:0007669"/>
    <property type="project" value="UniProtKB-UniRule"/>
</dbReference>
<dbReference type="CDD" id="cd00378">
    <property type="entry name" value="SHMT"/>
    <property type="match status" value="1"/>
</dbReference>
<dbReference type="FunFam" id="3.40.640.10:FF:000001">
    <property type="entry name" value="Serine hydroxymethyltransferase"/>
    <property type="match status" value="1"/>
</dbReference>
<dbReference type="FunFam" id="3.90.1150.10:FF:000003">
    <property type="entry name" value="Serine hydroxymethyltransferase"/>
    <property type="match status" value="1"/>
</dbReference>
<dbReference type="Gene3D" id="3.90.1150.10">
    <property type="entry name" value="Aspartate Aminotransferase, domain 1"/>
    <property type="match status" value="1"/>
</dbReference>
<dbReference type="Gene3D" id="3.40.640.10">
    <property type="entry name" value="Type I PLP-dependent aspartate aminotransferase-like (Major domain)"/>
    <property type="match status" value="1"/>
</dbReference>
<dbReference type="HAMAP" id="MF_00051">
    <property type="entry name" value="SHMT"/>
    <property type="match status" value="1"/>
</dbReference>
<dbReference type="InterPro" id="IPR015424">
    <property type="entry name" value="PyrdxlP-dep_Trfase"/>
</dbReference>
<dbReference type="InterPro" id="IPR015421">
    <property type="entry name" value="PyrdxlP-dep_Trfase_major"/>
</dbReference>
<dbReference type="InterPro" id="IPR015422">
    <property type="entry name" value="PyrdxlP-dep_Trfase_small"/>
</dbReference>
<dbReference type="InterPro" id="IPR001085">
    <property type="entry name" value="Ser_HO-MeTrfase"/>
</dbReference>
<dbReference type="InterPro" id="IPR049943">
    <property type="entry name" value="Ser_HO-MeTrfase-like"/>
</dbReference>
<dbReference type="InterPro" id="IPR019798">
    <property type="entry name" value="Ser_HO-MeTrfase_PLP_BS"/>
</dbReference>
<dbReference type="InterPro" id="IPR039429">
    <property type="entry name" value="SHMT-like_dom"/>
</dbReference>
<dbReference type="NCBIfam" id="NF000586">
    <property type="entry name" value="PRK00011.1"/>
    <property type="match status" value="1"/>
</dbReference>
<dbReference type="PANTHER" id="PTHR11680">
    <property type="entry name" value="SERINE HYDROXYMETHYLTRANSFERASE"/>
    <property type="match status" value="1"/>
</dbReference>
<dbReference type="PANTHER" id="PTHR11680:SF50">
    <property type="entry name" value="SERINE HYDROXYMETHYLTRANSFERASE"/>
    <property type="match status" value="1"/>
</dbReference>
<dbReference type="Pfam" id="PF00464">
    <property type="entry name" value="SHMT"/>
    <property type="match status" value="1"/>
</dbReference>
<dbReference type="PIRSF" id="PIRSF000412">
    <property type="entry name" value="SHMT"/>
    <property type="match status" value="1"/>
</dbReference>
<dbReference type="SUPFAM" id="SSF53383">
    <property type="entry name" value="PLP-dependent transferases"/>
    <property type="match status" value="1"/>
</dbReference>
<dbReference type="PROSITE" id="PS00096">
    <property type="entry name" value="SHMT"/>
    <property type="match status" value="1"/>
</dbReference>
<feature type="chain" id="PRO_1000195435" description="Serine hydroxymethyltransferase">
    <location>
        <begin position="1"/>
        <end position="417"/>
    </location>
</feature>
<feature type="binding site" evidence="1">
    <location>
        <position position="121"/>
    </location>
    <ligand>
        <name>(6S)-5,6,7,8-tetrahydrofolate</name>
        <dbReference type="ChEBI" id="CHEBI:57453"/>
    </ligand>
</feature>
<feature type="binding site" evidence="1">
    <location>
        <begin position="125"/>
        <end position="127"/>
    </location>
    <ligand>
        <name>(6S)-5,6,7,8-tetrahydrofolate</name>
        <dbReference type="ChEBI" id="CHEBI:57453"/>
    </ligand>
</feature>
<feature type="binding site" evidence="1">
    <location>
        <begin position="355"/>
        <end position="357"/>
    </location>
    <ligand>
        <name>(6S)-5,6,7,8-tetrahydrofolate</name>
        <dbReference type="ChEBI" id="CHEBI:57453"/>
    </ligand>
</feature>
<feature type="site" description="Plays an important role in substrate specificity" evidence="1">
    <location>
        <position position="228"/>
    </location>
</feature>
<feature type="modified residue" description="N6-(pyridoxal phosphate)lysine" evidence="1">
    <location>
        <position position="229"/>
    </location>
</feature>
<proteinExistence type="inferred from homology"/>
<protein>
    <recommendedName>
        <fullName evidence="1">Serine hydroxymethyltransferase</fullName>
        <shortName evidence="1">SHMT</shortName>
        <shortName evidence="1">Serine methylase</shortName>
        <ecNumber evidence="1">2.1.2.1</ecNumber>
    </recommendedName>
</protein>
<gene>
    <name evidence="1" type="primary">glyA</name>
    <name type="ordered locus">BUAP5A_284</name>
</gene>
<organism>
    <name type="scientific">Buchnera aphidicola subsp. Acyrthosiphon pisum (strain 5A)</name>
    <dbReference type="NCBI Taxonomy" id="563178"/>
    <lineage>
        <taxon>Bacteria</taxon>
        <taxon>Pseudomonadati</taxon>
        <taxon>Pseudomonadota</taxon>
        <taxon>Gammaproteobacteria</taxon>
        <taxon>Enterobacterales</taxon>
        <taxon>Erwiniaceae</taxon>
        <taxon>Buchnera</taxon>
    </lineage>
</organism>
<keyword id="KW-0028">Amino-acid biosynthesis</keyword>
<keyword id="KW-0963">Cytoplasm</keyword>
<keyword id="KW-0554">One-carbon metabolism</keyword>
<keyword id="KW-0663">Pyridoxal phosphate</keyword>
<keyword id="KW-0808">Transferase</keyword>
<comment type="function">
    <text evidence="1">Catalyzes the reversible interconversion of serine and glycine with tetrahydrofolate (THF) serving as the one-carbon carrier. This reaction serves as the major source of one-carbon groups required for the biosynthesis of purines, thymidylate, methionine, and other important biomolecules. Also exhibits THF-independent aldolase activity toward beta-hydroxyamino acids, producing glycine and aldehydes, via a retro-aldol mechanism.</text>
</comment>
<comment type="catalytic activity">
    <reaction evidence="1">
        <text>(6R)-5,10-methylene-5,6,7,8-tetrahydrofolate + glycine + H2O = (6S)-5,6,7,8-tetrahydrofolate + L-serine</text>
        <dbReference type="Rhea" id="RHEA:15481"/>
        <dbReference type="ChEBI" id="CHEBI:15377"/>
        <dbReference type="ChEBI" id="CHEBI:15636"/>
        <dbReference type="ChEBI" id="CHEBI:33384"/>
        <dbReference type="ChEBI" id="CHEBI:57305"/>
        <dbReference type="ChEBI" id="CHEBI:57453"/>
        <dbReference type="EC" id="2.1.2.1"/>
    </reaction>
</comment>
<comment type="cofactor">
    <cofactor evidence="1">
        <name>pyridoxal 5'-phosphate</name>
        <dbReference type="ChEBI" id="CHEBI:597326"/>
    </cofactor>
</comment>
<comment type="pathway">
    <text evidence="1">One-carbon metabolism; tetrahydrofolate interconversion.</text>
</comment>
<comment type="pathway">
    <text evidence="1">Amino-acid biosynthesis; glycine biosynthesis; glycine from L-serine: step 1/1.</text>
</comment>
<comment type="subunit">
    <text evidence="1">Homodimer.</text>
</comment>
<comment type="subcellular location">
    <subcellularLocation>
        <location evidence="1">Cytoplasm</location>
    </subcellularLocation>
</comment>
<comment type="similarity">
    <text evidence="1">Belongs to the SHMT family.</text>
</comment>
<reference key="1">
    <citation type="journal article" date="2009" name="Science">
        <title>The dynamics and time scale of ongoing genomic erosion in symbiotic bacteria.</title>
        <authorList>
            <person name="Moran N.A."/>
            <person name="McLaughlin H.J."/>
            <person name="Sorek R."/>
        </authorList>
    </citation>
    <scope>NUCLEOTIDE SEQUENCE [LARGE SCALE GENOMIC DNA]</scope>
    <source>
        <strain>5A</strain>
    </source>
</reference>
<accession>B8D981</accession>
<sequence length="417" mass="46670">MLNNKIDFSKYDPKLWFAIEQEKKRQENHIELIASENYTSNYVMDVQGSQLTNKYAEGYPGKRYYGGCEYVDIIEELAIERAKKLFNADYANVQPHSGSQANFSVYTALLNPGDTILGMKLSHGGHLTHGSSVNFSGKMYNVISYGVDENGEINYEELLRLTKKYKPKMIIGGFSAYSGICNWKKMRFIADKADAYFVVDMAHVAGLVAAGIYPNPINYAHVVTSTTHKTLAGPRGGLILAKNGDDILYKKLNLSVFPGAQGGPLMHVIAAKAIAFKEALEPKFKTYQKQIVKNSKVMVERFLEKGYKIISGHTFNHLFLIDLTNKKITGKDADIILSKANITVNKNTIPNDLKSPFITSGIRIGTAAVTRRGFKENEVSKISDWITSILNNVDDHNNVLQIKKKVLEMCLKYPVYI</sequence>
<name>GLYA_BUCA5</name>
<evidence type="ECO:0000255" key="1">
    <source>
        <dbReference type="HAMAP-Rule" id="MF_00051"/>
    </source>
</evidence>